<feature type="chain" id="PRO_0000356058" description="Pentatricopeptide repeat-containing protein At2g41720">
    <location>
        <begin position="1"/>
        <end position="822"/>
    </location>
</feature>
<feature type="repeat" description="PPR 1">
    <location>
        <begin position="106"/>
        <end position="136"/>
    </location>
</feature>
<feature type="repeat" description="PPR 2">
    <location>
        <begin position="142"/>
        <end position="176"/>
    </location>
</feature>
<feature type="repeat" description="PPR 3">
    <location>
        <begin position="177"/>
        <end position="211"/>
    </location>
</feature>
<feature type="repeat" description="PPR 4">
    <location>
        <begin position="212"/>
        <end position="246"/>
    </location>
</feature>
<feature type="repeat" description="PPR 5">
    <location>
        <begin position="247"/>
        <end position="281"/>
    </location>
</feature>
<feature type="repeat" description="PPR 6">
    <location>
        <begin position="282"/>
        <end position="316"/>
    </location>
</feature>
<feature type="repeat" description="PPR 7">
    <location>
        <begin position="319"/>
        <end position="353"/>
    </location>
</feature>
<feature type="repeat" description="PPR 8">
    <location>
        <begin position="354"/>
        <end position="388"/>
    </location>
</feature>
<feature type="repeat" description="PPR 9">
    <location>
        <begin position="389"/>
        <end position="423"/>
    </location>
</feature>
<feature type="repeat" description="PPR 10">
    <location>
        <begin position="424"/>
        <end position="458"/>
    </location>
</feature>
<feature type="repeat" description="PPR 11">
    <location>
        <begin position="459"/>
        <end position="493"/>
    </location>
</feature>
<feature type="repeat" description="PPR 12">
    <location>
        <begin position="494"/>
        <end position="528"/>
    </location>
</feature>
<feature type="repeat" description="PPR 13">
    <location>
        <begin position="529"/>
        <end position="563"/>
    </location>
</feature>
<feature type="repeat" description="PPR 14">
    <location>
        <begin position="564"/>
        <end position="598"/>
    </location>
</feature>
<feature type="repeat" description="PPR 15">
    <location>
        <begin position="599"/>
        <end position="633"/>
    </location>
</feature>
<feature type="repeat" description="PPR 16">
    <location>
        <begin position="634"/>
        <end position="668"/>
    </location>
</feature>
<feature type="repeat" description="PPR 17">
    <location>
        <begin position="669"/>
        <end position="699"/>
    </location>
</feature>
<feature type="repeat" description="PPR 18">
    <location>
        <begin position="704"/>
        <end position="738"/>
    </location>
</feature>
<feature type="repeat" description="PPR 19">
    <location>
        <begin position="739"/>
        <end position="773"/>
    </location>
</feature>
<feature type="region of interest" description="Disordered" evidence="1">
    <location>
        <begin position="1"/>
        <end position="28"/>
    </location>
</feature>
<name>PP199_ARATH</name>
<comment type="alternative products">
    <event type="alternative splicing"/>
    <isoform>
        <id>Q8RWS8-1</id>
        <name>1</name>
        <sequence type="displayed"/>
    </isoform>
    <text>A number of isoforms are produced. According to EST sequences.</text>
</comment>
<comment type="similarity">
    <text evidence="2">Belongs to the PPR family. P subfamily.</text>
</comment>
<comment type="sequence caution" evidence="2">
    <conflict type="erroneous gene model prediction">
        <sequence resource="EMBL-CDS" id="AAC02776"/>
    </conflict>
</comment>
<comment type="online information" name="Pentatricopeptide repeat proteins">
    <link uri="https://ppr.plantenergy.uwa.edu.au"/>
</comment>
<proteinExistence type="evidence at transcript level"/>
<keyword id="KW-0025">Alternative splicing</keyword>
<keyword id="KW-1185">Reference proteome</keyword>
<keyword id="KW-0677">Repeat</keyword>
<evidence type="ECO:0000256" key="1">
    <source>
        <dbReference type="SAM" id="MobiDB-lite"/>
    </source>
</evidence>
<evidence type="ECO:0000305" key="2"/>
<dbReference type="EMBL" id="AC002339">
    <property type="protein sequence ID" value="AAC02776.1"/>
    <property type="status" value="ALT_SEQ"/>
    <property type="molecule type" value="Genomic_DNA"/>
</dbReference>
<dbReference type="EMBL" id="CP002685">
    <property type="protein sequence ID" value="AEC10025.1"/>
    <property type="molecule type" value="Genomic_DNA"/>
</dbReference>
<dbReference type="EMBL" id="AY091135">
    <property type="protein sequence ID" value="AAM14084.1"/>
    <property type="molecule type" value="mRNA"/>
</dbReference>
<dbReference type="EMBL" id="AY117242">
    <property type="protein sequence ID" value="AAM51317.1"/>
    <property type="molecule type" value="mRNA"/>
</dbReference>
<dbReference type="PIR" id="C84845">
    <property type="entry name" value="C84845"/>
</dbReference>
<dbReference type="RefSeq" id="NP_850356.1">
    <molecule id="Q8RWS8-1"/>
    <property type="nucleotide sequence ID" value="NM_180025.2"/>
</dbReference>
<dbReference type="SMR" id="Q8RWS8"/>
<dbReference type="BioGRID" id="4108">
    <property type="interactions" value="2"/>
</dbReference>
<dbReference type="FunCoup" id="Q8RWS8">
    <property type="interactions" value="1848"/>
</dbReference>
<dbReference type="IntAct" id="Q8RWS8">
    <property type="interactions" value="2"/>
</dbReference>
<dbReference type="STRING" id="3702.Q8RWS8"/>
<dbReference type="iPTMnet" id="Q8RWS8"/>
<dbReference type="PaxDb" id="3702-AT2G41720.1"/>
<dbReference type="ProteomicsDB" id="249160">
    <molecule id="Q8RWS8-1"/>
</dbReference>
<dbReference type="EnsemblPlants" id="AT2G41720.1">
    <molecule id="Q8RWS8-1"/>
    <property type="protein sequence ID" value="AT2G41720.1"/>
    <property type="gene ID" value="AT2G41720"/>
</dbReference>
<dbReference type="GeneID" id="818771"/>
<dbReference type="Gramene" id="AT2G41720.1">
    <molecule id="Q8RWS8-1"/>
    <property type="protein sequence ID" value="AT2G41720.1"/>
    <property type="gene ID" value="AT2G41720"/>
</dbReference>
<dbReference type="KEGG" id="ath:AT2G41720"/>
<dbReference type="Araport" id="AT2G41720"/>
<dbReference type="TAIR" id="AT2G41720">
    <property type="gene designation" value="EMB2654"/>
</dbReference>
<dbReference type="eggNOG" id="KOG4197">
    <property type="taxonomic scope" value="Eukaryota"/>
</dbReference>
<dbReference type="InParanoid" id="Q8RWS8"/>
<dbReference type="PhylomeDB" id="Q8RWS8"/>
<dbReference type="PRO" id="PR:Q8RWS8"/>
<dbReference type="Proteomes" id="UP000006548">
    <property type="component" value="Chromosome 2"/>
</dbReference>
<dbReference type="ExpressionAtlas" id="Q8RWS8">
    <property type="expression patterns" value="baseline and differential"/>
</dbReference>
<dbReference type="GO" id="GO:0009507">
    <property type="term" value="C:chloroplast"/>
    <property type="evidence" value="ECO:0007669"/>
    <property type="project" value="GOC"/>
</dbReference>
<dbReference type="GO" id="GO:0003735">
    <property type="term" value="F:structural constituent of ribosome"/>
    <property type="evidence" value="ECO:0000315"/>
    <property type="project" value="TAIR"/>
</dbReference>
<dbReference type="GO" id="GO:0010239">
    <property type="term" value="P:chloroplast mRNA processing"/>
    <property type="evidence" value="ECO:0000315"/>
    <property type="project" value="TAIR"/>
</dbReference>
<dbReference type="GO" id="GO:0009793">
    <property type="term" value="P:embryo development ending in seed dormancy"/>
    <property type="evidence" value="ECO:0000315"/>
    <property type="project" value="TAIR"/>
</dbReference>
<dbReference type="GO" id="GO:0008380">
    <property type="term" value="P:RNA splicing"/>
    <property type="evidence" value="ECO:0000315"/>
    <property type="project" value="TAIR"/>
</dbReference>
<dbReference type="FunFam" id="1.25.40.10:FF:000554">
    <property type="entry name" value="Pentatricopeptide repeat-containing protein At2g41720"/>
    <property type="match status" value="1"/>
</dbReference>
<dbReference type="FunFam" id="1.25.40.10:FF:000676">
    <property type="entry name" value="Pentatricopeptide repeat-containing protein At2g41720"/>
    <property type="match status" value="2"/>
</dbReference>
<dbReference type="FunFam" id="1.25.40.10:FF:000684">
    <property type="entry name" value="Pentatricopeptide repeat-containing protein At2g41720"/>
    <property type="match status" value="1"/>
</dbReference>
<dbReference type="FunFam" id="1.25.40.10:FF:002085">
    <property type="entry name" value="Pentatricopeptide repeat-containing protein At2g41720"/>
    <property type="match status" value="1"/>
</dbReference>
<dbReference type="Gene3D" id="1.25.40.10">
    <property type="entry name" value="Tetratricopeptide repeat domain"/>
    <property type="match status" value="7"/>
</dbReference>
<dbReference type="InterPro" id="IPR002885">
    <property type="entry name" value="Pentatricopeptide_rpt"/>
</dbReference>
<dbReference type="InterPro" id="IPR011990">
    <property type="entry name" value="TPR-like_helical_dom_sf"/>
</dbReference>
<dbReference type="NCBIfam" id="TIGR00756">
    <property type="entry name" value="PPR"/>
    <property type="match status" value="13"/>
</dbReference>
<dbReference type="PANTHER" id="PTHR47938:SF5">
    <property type="entry name" value="OS07G0213300 PROTEIN"/>
    <property type="match status" value="1"/>
</dbReference>
<dbReference type="PANTHER" id="PTHR47938">
    <property type="entry name" value="RESPIRATORY COMPLEX I CHAPERONE (CIA84), PUTATIVE (AFU_ORTHOLOGUE AFUA_2G06020)-RELATED"/>
    <property type="match status" value="1"/>
</dbReference>
<dbReference type="Pfam" id="PF01535">
    <property type="entry name" value="PPR"/>
    <property type="match status" value="1"/>
</dbReference>
<dbReference type="Pfam" id="PF13041">
    <property type="entry name" value="PPR_2"/>
    <property type="match status" value="4"/>
</dbReference>
<dbReference type="Pfam" id="PF13812">
    <property type="entry name" value="PPR_3"/>
    <property type="match status" value="5"/>
</dbReference>
<dbReference type="SUPFAM" id="SSF48452">
    <property type="entry name" value="TPR-like"/>
    <property type="match status" value="1"/>
</dbReference>
<dbReference type="PROSITE" id="PS51375">
    <property type="entry name" value="PPR"/>
    <property type="match status" value="18"/>
</dbReference>
<sequence>MATVTNFKLVTPPESSRADKPGATKASDAFQEKKSVSVNYDRGEHEVSVNIGGLRKADIPRRYRIRVENDRFQKDWSVSEVVDRLMALNRWEEVDGVLNSWVGRFARKNFPVLIRELSRRGCIELCVNVFKWMKIQKNYCARNDIYNMMIRLHARHNWVDQARGLFFEMQKWSCKPDAETYDALINAHGRAGQWRWAMNLMDDMLRAAIAPSRSTYNNLINACGSSGNWREALEVCKKMTDNGVGPDLVTHNIVLSAYKSGRQYSKALSYFELMKGAKVRPDTTTFNIIIYCLSKLGQSSQALDLFNSMREKRAECRPDVVTFTSIMHLYSVKGEIENCRAVFEAMVAEGLKPNIVSYNALMGAYAVHGMSGTALSVLGDIKQNGIIPDVVSYTCLLNSYGRSRQPGKAKEVFLMMRKERRKPNVVTYNALIDAYGSNGFLAEAVEIFRQMEQDGIKPNVVSVCTLLAACSRSKKKVNVDTVLSAAQSRGINLNTAAYNSAIGSYINAAELEKAIALYQSMRKKKVKADSVTFTILISGSCRMSKYPEAISYLKEMEDLSIPLTKEVYSSVLCAYSKQGQVTEAESIFNQMKMAGCEPDVIAYTSMLHAYNASEKWGKACELFLEMEANGIEPDSIACSALMRAFNKGGQPSNVFVLMDLMREKEIPFTGAVFFEIFSACNTLQEWKRAIDLIQMMDPYLPSLSIGLTNQMLHLFGKSGKVEAMMKLFYKIIASGVGINLKTYAILLEHLLAVGNWRKYIEVLEWMSGAGIQPSNQMYRDIISFGERSAGIEFEPLIRQKLESLRNKGEGLIPTFRHEGTLL</sequence>
<gene>
    <name type="primary">EMB2654</name>
    <name type="ordered locus">At2g41720</name>
    <name type="ORF">T11A7.18</name>
</gene>
<protein>
    <recommendedName>
        <fullName>Pentatricopeptide repeat-containing protein At2g41720</fullName>
    </recommendedName>
    <alternativeName>
        <fullName>Protein EMBRYO DEFECTIVE 2654</fullName>
    </alternativeName>
</protein>
<reference key="1">
    <citation type="journal article" date="1999" name="Nature">
        <title>Sequence and analysis of chromosome 2 of the plant Arabidopsis thaliana.</title>
        <authorList>
            <person name="Lin X."/>
            <person name="Kaul S."/>
            <person name="Rounsley S.D."/>
            <person name="Shea T.P."/>
            <person name="Benito M.-I."/>
            <person name="Town C.D."/>
            <person name="Fujii C.Y."/>
            <person name="Mason T.M."/>
            <person name="Bowman C.L."/>
            <person name="Barnstead M.E."/>
            <person name="Feldblyum T.V."/>
            <person name="Buell C.R."/>
            <person name="Ketchum K.A."/>
            <person name="Lee J.J."/>
            <person name="Ronning C.M."/>
            <person name="Koo H.L."/>
            <person name="Moffat K.S."/>
            <person name="Cronin L.A."/>
            <person name="Shen M."/>
            <person name="Pai G."/>
            <person name="Van Aken S."/>
            <person name="Umayam L."/>
            <person name="Tallon L.J."/>
            <person name="Gill J.E."/>
            <person name="Adams M.D."/>
            <person name="Carrera A.J."/>
            <person name="Creasy T.H."/>
            <person name="Goodman H.M."/>
            <person name="Somerville C.R."/>
            <person name="Copenhaver G.P."/>
            <person name="Preuss D."/>
            <person name="Nierman W.C."/>
            <person name="White O."/>
            <person name="Eisen J.A."/>
            <person name="Salzberg S.L."/>
            <person name="Fraser C.M."/>
            <person name="Venter J.C."/>
        </authorList>
    </citation>
    <scope>NUCLEOTIDE SEQUENCE [LARGE SCALE GENOMIC DNA]</scope>
    <source>
        <strain>cv. Columbia</strain>
    </source>
</reference>
<reference key="2">
    <citation type="journal article" date="2017" name="Plant J.">
        <title>Araport11: a complete reannotation of the Arabidopsis thaliana reference genome.</title>
        <authorList>
            <person name="Cheng C.Y."/>
            <person name="Krishnakumar V."/>
            <person name="Chan A.P."/>
            <person name="Thibaud-Nissen F."/>
            <person name="Schobel S."/>
            <person name="Town C.D."/>
        </authorList>
    </citation>
    <scope>GENOME REANNOTATION</scope>
    <source>
        <strain>cv. Columbia</strain>
    </source>
</reference>
<reference key="3">
    <citation type="journal article" date="2003" name="Science">
        <title>Empirical analysis of transcriptional activity in the Arabidopsis genome.</title>
        <authorList>
            <person name="Yamada K."/>
            <person name="Lim J."/>
            <person name="Dale J.M."/>
            <person name="Chen H."/>
            <person name="Shinn P."/>
            <person name="Palm C.J."/>
            <person name="Southwick A.M."/>
            <person name="Wu H.C."/>
            <person name="Kim C.J."/>
            <person name="Nguyen M."/>
            <person name="Pham P.K."/>
            <person name="Cheuk R.F."/>
            <person name="Karlin-Newmann G."/>
            <person name="Liu S.X."/>
            <person name="Lam B."/>
            <person name="Sakano H."/>
            <person name="Wu T."/>
            <person name="Yu G."/>
            <person name="Miranda M."/>
            <person name="Quach H.L."/>
            <person name="Tripp M."/>
            <person name="Chang C.H."/>
            <person name="Lee J.M."/>
            <person name="Toriumi M.J."/>
            <person name="Chan M.M."/>
            <person name="Tang C.C."/>
            <person name="Onodera C.S."/>
            <person name="Deng J.M."/>
            <person name="Akiyama K."/>
            <person name="Ansari Y."/>
            <person name="Arakawa T."/>
            <person name="Banh J."/>
            <person name="Banno F."/>
            <person name="Bowser L."/>
            <person name="Brooks S.Y."/>
            <person name="Carninci P."/>
            <person name="Chao Q."/>
            <person name="Choy N."/>
            <person name="Enju A."/>
            <person name="Goldsmith A.D."/>
            <person name="Gurjal M."/>
            <person name="Hansen N.F."/>
            <person name="Hayashizaki Y."/>
            <person name="Johnson-Hopson C."/>
            <person name="Hsuan V.W."/>
            <person name="Iida K."/>
            <person name="Karnes M."/>
            <person name="Khan S."/>
            <person name="Koesema E."/>
            <person name="Ishida J."/>
            <person name="Jiang P.X."/>
            <person name="Jones T."/>
            <person name="Kawai J."/>
            <person name="Kamiya A."/>
            <person name="Meyers C."/>
            <person name="Nakajima M."/>
            <person name="Narusaka M."/>
            <person name="Seki M."/>
            <person name="Sakurai T."/>
            <person name="Satou M."/>
            <person name="Tamse R."/>
            <person name="Vaysberg M."/>
            <person name="Wallender E.K."/>
            <person name="Wong C."/>
            <person name="Yamamura Y."/>
            <person name="Yuan S."/>
            <person name="Shinozaki K."/>
            <person name="Davis R.W."/>
            <person name="Theologis A."/>
            <person name="Ecker J.R."/>
        </authorList>
    </citation>
    <scope>NUCLEOTIDE SEQUENCE [LARGE SCALE MRNA]</scope>
    <source>
        <strain>cv. Columbia</strain>
    </source>
</reference>
<reference key="4">
    <citation type="journal article" date="2004" name="Plant Cell">
        <title>Genome-wide analysis of Arabidopsis pentatricopeptide repeat proteins reveals their essential role in organelle biogenesis.</title>
        <authorList>
            <person name="Lurin C."/>
            <person name="Andres C."/>
            <person name="Aubourg S."/>
            <person name="Bellaoui M."/>
            <person name="Bitton F."/>
            <person name="Bruyere C."/>
            <person name="Caboche M."/>
            <person name="Debast C."/>
            <person name="Gualberto J."/>
            <person name="Hoffmann B."/>
            <person name="Lecharny A."/>
            <person name="Le Ret M."/>
            <person name="Martin-Magniette M.-L."/>
            <person name="Mireau H."/>
            <person name="Peeters N."/>
            <person name="Renou J.-P."/>
            <person name="Szurek B."/>
            <person name="Taconnat L."/>
            <person name="Small I."/>
        </authorList>
    </citation>
    <scope>GENE FAMILY</scope>
</reference>
<organism>
    <name type="scientific">Arabidopsis thaliana</name>
    <name type="common">Mouse-ear cress</name>
    <dbReference type="NCBI Taxonomy" id="3702"/>
    <lineage>
        <taxon>Eukaryota</taxon>
        <taxon>Viridiplantae</taxon>
        <taxon>Streptophyta</taxon>
        <taxon>Embryophyta</taxon>
        <taxon>Tracheophyta</taxon>
        <taxon>Spermatophyta</taxon>
        <taxon>Magnoliopsida</taxon>
        <taxon>eudicotyledons</taxon>
        <taxon>Gunneridae</taxon>
        <taxon>Pentapetalae</taxon>
        <taxon>rosids</taxon>
        <taxon>malvids</taxon>
        <taxon>Brassicales</taxon>
        <taxon>Brassicaceae</taxon>
        <taxon>Camelineae</taxon>
        <taxon>Arabidopsis</taxon>
    </lineage>
</organism>
<accession>Q8RWS8</accession>
<accession>O22948</accession>